<name>RL36_ECOBW</name>
<protein>
    <recommendedName>
        <fullName evidence="1">Large ribosomal subunit protein bL36</fullName>
    </recommendedName>
    <alternativeName>
        <fullName evidence="2">50S ribosomal protein L36</fullName>
    </alternativeName>
</protein>
<sequence length="38" mass="4364">MKVRASVKKLCRNCKIVKRDGVIRVICSAEPKHKQRQG</sequence>
<evidence type="ECO:0000255" key="1">
    <source>
        <dbReference type="HAMAP-Rule" id="MF_00251"/>
    </source>
</evidence>
<evidence type="ECO:0000305" key="2"/>
<organism>
    <name type="scientific">Escherichia coli (strain K12 / MC4100 / BW2952)</name>
    <dbReference type="NCBI Taxonomy" id="595496"/>
    <lineage>
        <taxon>Bacteria</taxon>
        <taxon>Pseudomonadati</taxon>
        <taxon>Pseudomonadota</taxon>
        <taxon>Gammaproteobacteria</taxon>
        <taxon>Enterobacterales</taxon>
        <taxon>Enterobacteriaceae</taxon>
        <taxon>Escherichia</taxon>
    </lineage>
</organism>
<gene>
    <name evidence="1" type="primary">rpmJ</name>
    <name type="ordered locus">BWG_2990</name>
</gene>
<keyword id="KW-0687">Ribonucleoprotein</keyword>
<keyword id="KW-0689">Ribosomal protein</keyword>
<proteinExistence type="inferred from homology"/>
<accession>C4ZUF4</accession>
<dbReference type="EMBL" id="CP001396">
    <property type="protein sequence ID" value="ACR61873.1"/>
    <property type="molecule type" value="Genomic_DNA"/>
</dbReference>
<dbReference type="RefSeq" id="WP_000868187.1">
    <property type="nucleotide sequence ID" value="NC_012759.1"/>
</dbReference>
<dbReference type="SMR" id="C4ZUF4"/>
<dbReference type="GeneID" id="98390421"/>
<dbReference type="KEGG" id="ebw:BWG_2990"/>
<dbReference type="HOGENOM" id="CLU_135723_6_2_6"/>
<dbReference type="GO" id="GO:0005737">
    <property type="term" value="C:cytoplasm"/>
    <property type="evidence" value="ECO:0007669"/>
    <property type="project" value="UniProtKB-ARBA"/>
</dbReference>
<dbReference type="GO" id="GO:1990904">
    <property type="term" value="C:ribonucleoprotein complex"/>
    <property type="evidence" value="ECO:0007669"/>
    <property type="project" value="UniProtKB-KW"/>
</dbReference>
<dbReference type="GO" id="GO:0005840">
    <property type="term" value="C:ribosome"/>
    <property type="evidence" value="ECO:0007669"/>
    <property type="project" value="UniProtKB-KW"/>
</dbReference>
<dbReference type="GO" id="GO:0003735">
    <property type="term" value="F:structural constituent of ribosome"/>
    <property type="evidence" value="ECO:0007669"/>
    <property type="project" value="InterPro"/>
</dbReference>
<dbReference type="GO" id="GO:0006412">
    <property type="term" value="P:translation"/>
    <property type="evidence" value="ECO:0007669"/>
    <property type="project" value="UniProtKB-UniRule"/>
</dbReference>
<dbReference type="HAMAP" id="MF_00251">
    <property type="entry name" value="Ribosomal_bL36"/>
    <property type="match status" value="1"/>
</dbReference>
<dbReference type="InterPro" id="IPR000473">
    <property type="entry name" value="Ribosomal_bL36"/>
</dbReference>
<dbReference type="InterPro" id="IPR035977">
    <property type="entry name" value="Ribosomal_bL36_sp"/>
</dbReference>
<dbReference type="NCBIfam" id="TIGR01022">
    <property type="entry name" value="rpmJ_bact"/>
    <property type="match status" value="1"/>
</dbReference>
<dbReference type="PANTHER" id="PTHR42888">
    <property type="entry name" value="50S RIBOSOMAL PROTEIN L36, CHLOROPLASTIC"/>
    <property type="match status" value="1"/>
</dbReference>
<dbReference type="PANTHER" id="PTHR42888:SF1">
    <property type="entry name" value="LARGE RIBOSOMAL SUBUNIT PROTEIN BL36C"/>
    <property type="match status" value="1"/>
</dbReference>
<dbReference type="Pfam" id="PF00444">
    <property type="entry name" value="Ribosomal_L36"/>
    <property type="match status" value="1"/>
</dbReference>
<dbReference type="SUPFAM" id="SSF57840">
    <property type="entry name" value="Ribosomal protein L36"/>
    <property type="match status" value="1"/>
</dbReference>
<dbReference type="PROSITE" id="PS00828">
    <property type="entry name" value="RIBOSOMAL_L36"/>
    <property type="match status" value="1"/>
</dbReference>
<feature type="chain" id="PRO_1000204548" description="Large ribosomal subunit protein bL36">
    <location>
        <begin position="1"/>
        <end position="38"/>
    </location>
</feature>
<reference key="1">
    <citation type="journal article" date="2009" name="J. Bacteriol.">
        <title>Genomic sequencing reveals regulatory mutations and recombinational events in the widely used MC4100 lineage of Escherichia coli K-12.</title>
        <authorList>
            <person name="Ferenci T."/>
            <person name="Zhou Z."/>
            <person name="Betteridge T."/>
            <person name="Ren Y."/>
            <person name="Liu Y."/>
            <person name="Feng L."/>
            <person name="Reeves P.R."/>
            <person name="Wang L."/>
        </authorList>
    </citation>
    <scope>NUCLEOTIDE SEQUENCE [LARGE SCALE GENOMIC DNA]</scope>
    <source>
        <strain>K12 / MC4100 / BW2952</strain>
    </source>
</reference>
<comment type="similarity">
    <text evidence="1">Belongs to the bacterial ribosomal protein bL36 family.</text>
</comment>